<feature type="chain" id="PRO_0000223457" description="Urease accessory protein UreE">
    <location>
        <begin position="1"/>
        <end position="239"/>
    </location>
</feature>
<feature type="region of interest" description="Disordered" evidence="2">
    <location>
        <begin position="185"/>
        <end position="239"/>
    </location>
</feature>
<feature type="compositionally biased region" description="Basic and acidic residues" evidence="2">
    <location>
        <begin position="204"/>
        <end position="239"/>
    </location>
</feature>
<dbReference type="EMBL" id="AY363682">
    <property type="protein sequence ID" value="AAR15103.1"/>
    <property type="molecule type" value="Genomic_DNA"/>
</dbReference>
<dbReference type="SMR" id="Q6UR67"/>
<dbReference type="STRING" id="29484.ERS008455_03383"/>
<dbReference type="GO" id="GO:0005737">
    <property type="term" value="C:cytoplasm"/>
    <property type="evidence" value="ECO:0007669"/>
    <property type="project" value="UniProtKB-SubCell"/>
</dbReference>
<dbReference type="GO" id="GO:0016151">
    <property type="term" value="F:nickel cation binding"/>
    <property type="evidence" value="ECO:0007669"/>
    <property type="project" value="UniProtKB-UniRule"/>
</dbReference>
<dbReference type="GO" id="GO:0051082">
    <property type="term" value="F:unfolded protein binding"/>
    <property type="evidence" value="ECO:0007669"/>
    <property type="project" value="UniProtKB-UniRule"/>
</dbReference>
<dbReference type="GO" id="GO:0006457">
    <property type="term" value="P:protein folding"/>
    <property type="evidence" value="ECO:0007669"/>
    <property type="project" value="InterPro"/>
</dbReference>
<dbReference type="CDD" id="cd00571">
    <property type="entry name" value="UreE"/>
    <property type="match status" value="1"/>
</dbReference>
<dbReference type="Gene3D" id="2.60.260.20">
    <property type="entry name" value="Urease metallochaperone UreE, N-terminal domain"/>
    <property type="match status" value="1"/>
</dbReference>
<dbReference type="HAMAP" id="MF_00822">
    <property type="entry name" value="UreE"/>
    <property type="match status" value="1"/>
</dbReference>
<dbReference type="InterPro" id="IPR012406">
    <property type="entry name" value="UreE"/>
</dbReference>
<dbReference type="InterPro" id="IPR004029">
    <property type="entry name" value="UreE_N"/>
</dbReference>
<dbReference type="InterPro" id="IPR036118">
    <property type="entry name" value="UreE_N_sf"/>
</dbReference>
<dbReference type="NCBIfam" id="NF009761">
    <property type="entry name" value="PRK13262.1"/>
    <property type="match status" value="1"/>
</dbReference>
<dbReference type="Pfam" id="PF02814">
    <property type="entry name" value="UreE_N"/>
    <property type="match status" value="1"/>
</dbReference>
<dbReference type="SMART" id="SM00988">
    <property type="entry name" value="UreE_N"/>
    <property type="match status" value="1"/>
</dbReference>
<dbReference type="SUPFAM" id="SSF69287">
    <property type="entry name" value="Urease metallochaperone UreE, N-terminal domain"/>
    <property type="match status" value="1"/>
</dbReference>
<comment type="function">
    <text evidence="1">Involved in urease metallocenter assembly. Binds nickel. Probably functions as a nickel donor during metallocenter assembly.</text>
</comment>
<comment type="subcellular location">
    <subcellularLocation>
        <location evidence="1">Cytoplasm</location>
    </subcellularLocation>
</comment>
<comment type="similarity">
    <text evidence="1">Belongs to the UreE family.</text>
</comment>
<sequence length="239" mass="26620">MILIEHILGNVKKDPVWQAKLKDATFDLLVLDQREAQKSRCRKLSTQGLDLGISLDRHVVLADGDVLAWDEKTNVAVVVQINLRDVMVIDLSELKSRSPDELIKTCFELGHALGNQHWKAVTKNNEVYVPLTVATTMMDSVMRTHGFQHLPFRFVKGAEILPLLSNSEARLLFGGAEDTDTHVHVASPLDEPHGSGLHIHGIHSHGDGHSHSHDSHSHSHDSDHGHSHSHGDHDHDHKH</sequence>
<reference key="1">
    <citation type="submission" date="2003-08" db="EMBL/GenBank/DDBJ databases">
        <title>Yersinia frederiksenii urease gene locus (ureABCEFGD) and urea transporter gene (yut).</title>
        <authorList>
            <person name="Sebbane F."/>
            <person name="Lemaitre N."/>
            <person name="Simonet M."/>
        </authorList>
    </citation>
    <scope>NUCLEOTIDE SEQUENCE [GENOMIC DNA]</scope>
</reference>
<protein>
    <recommendedName>
        <fullName evidence="1">Urease accessory protein UreE</fullName>
    </recommendedName>
</protein>
<gene>
    <name evidence="1" type="primary">ureE</name>
</gene>
<accession>Q6UR67</accession>
<proteinExistence type="inferred from homology"/>
<organism>
    <name type="scientific">Yersinia frederiksenii</name>
    <dbReference type="NCBI Taxonomy" id="29484"/>
    <lineage>
        <taxon>Bacteria</taxon>
        <taxon>Pseudomonadati</taxon>
        <taxon>Pseudomonadota</taxon>
        <taxon>Gammaproteobacteria</taxon>
        <taxon>Enterobacterales</taxon>
        <taxon>Yersiniaceae</taxon>
        <taxon>Yersinia</taxon>
    </lineage>
</organism>
<evidence type="ECO:0000255" key="1">
    <source>
        <dbReference type="HAMAP-Rule" id="MF_00822"/>
    </source>
</evidence>
<evidence type="ECO:0000256" key="2">
    <source>
        <dbReference type="SAM" id="MobiDB-lite"/>
    </source>
</evidence>
<name>UREE_YERFR</name>
<keyword id="KW-0143">Chaperone</keyword>
<keyword id="KW-0963">Cytoplasm</keyword>
<keyword id="KW-0533">Nickel</keyword>
<keyword id="KW-0996">Nickel insertion</keyword>